<accession>B1XTK5</accession>
<keyword id="KW-0963">Cytoplasm</keyword>
<keyword id="KW-0444">Lipid biosynthesis</keyword>
<keyword id="KW-0443">Lipid metabolism</keyword>
<keyword id="KW-0594">Phospholipid biosynthesis</keyword>
<keyword id="KW-1208">Phospholipid metabolism</keyword>
<keyword id="KW-0808">Transferase</keyword>
<sequence length="337" mass="36363">MSVTLAIDAMGGDHGVVVTVSAACDFLEKHADVKIALVGDPDLIKQVLSKSPKAPMERIQIILASEVVLMDDPIEVALRRKKDSSMRVAIEQVKEGAADAVISSGNTGALMAISRYILKTLEGVDRPAIATAIPNELGRGTTMLDLGANADCEPMHLVQFAQMANVMVQVVDGEQNPSIGLLNIGEEVIKGNEVVKQTSELLRQTSLNFYGNVEGNDIFRGTTDIVVCDGFVGNVVLKASEGLAKMMSGLIREEFNRSLLTKLMAVCAIVPLLRVRKRVDHRRYNGAVLLGLRGCVIKSHGSADRFAFGFALDRAYEAAKNRMVERIAAAFVVETKV</sequence>
<dbReference type="EC" id="2.3.1.274" evidence="1"/>
<dbReference type="EMBL" id="CP001010">
    <property type="protein sequence ID" value="ACB43682.1"/>
    <property type="molecule type" value="Genomic_DNA"/>
</dbReference>
<dbReference type="SMR" id="B1XTK5"/>
<dbReference type="STRING" id="452638.Pnec_0404"/>
<dbReference type="KEGG" id="pne:Pnec_0404"/>
<dbReference type="eggNOG" id="COG0416">
    <property type="taxonomic scope" value="Bacteria"/>
</dbReference>
<dbReference type="HOGENOM" id="CLU_039379_1_0_4"/>
<dbReference type="OrthoDB" id="9806408at2"/>
<dbReference type="UniPathway" id="UPA00085"/>
<dbReference type="GO" id="GO:0005737">
    <property type="term" value="C:cytoplasm"/>
    <property type="evidence" value="ECO:0007669"/>
    <property type="project" value="UniProtKB-SubCell"/>
</dbReference>
<dbReference type="GO" id="GO:0043811">
    <property type="term" value="F:phosphate:acyl-[acyl carrier protein] acyltransferase activity"/>
    <property type="evidence" value="ECO:0007669"/>
    <property type="project" value="UniProtKB-UniRule"/>
</dbReference>
<dbReference type="GO" id="GO:0006633">
    <property type="term" value="P:fatty acid biosynthetic process"/>
    <property type="evidence" value="ECO:0007669"/>
    <property type="project" value="UniProtKB-UniRule"/>
</dbReference>
<dbReference type="GO" id="GO:0008654">
    <property type="term" value="P:phospholipid biosynthetic process"/>
    <property type="evidence" value="ECO:0007669"/>
    <property type="project" value="UniProtKB-KW"/>
</dbReference>
<dbReference type="Gene3D" id="3.40.718.10">
    <property type="entry name" value="Isopropylmalate Dehydrogenase"/>
    <property type="match status" value="1"/>
</dbReference>
<dbReference type="HAMAP" id="MF_00019">
    <property type="entry name" value="PlsX"/>
    <property type="match status" value="1"/>
</dbReference>
<dbReference type="InterPro" id="IPR003664">
    <property type="entry name" value="FA_synthesis"/>
</dbReference>
<dbReference type="InterPro" id="IPR012281">
    <property type="entry name" value="Phospholipid_synth_PlsX-like"/>
</dbReference>
<dbReference type="NCBIfam" id="TIGR00182">
    <property type="entry name" value="plsX"/>
    <property type="match status" value="1"/>
</dbReference>
<dbReference type="PANTHER" id="PTHR30100">
    <property type="entry name" value="FATTY ACID/PHOSPHOLIPID SYNTHESIS PROTEIN PLSX"/>
    <property type="match status" value="1"/>
</dbReference>
<dbReference type="PANTHER" id="PTHR30100:SF1">
    <property type="entry name" value="PHOSPHATE ACYLTRANSFERASE"/>
    <property type="match status" value="1"/>
</dbReference>
<dbReference type="Pfam" id="PF02504">
    <property type="entry name" value="FA_synthesis"/>
    <property type="match status" value="1"/>
</dbReference>
<dbReference type="PIRSF" id="PIRSF002465">
    <property type="entry name" value="Phsphlp_syn_PlsX"/>
    <property type="match status" value="1"/>
</dbReference>
<dbReference type="SUPFAM" id="SSF53659">
    <property type="entry name" value="Isocitrate/Isopropylmalate dehydrogenase-like"/>
    <property type="match status" value="1"/>
</dbReference>
<evidence type="ECO:0000255" key="1">
    <source>
        <dbReference type="HAMAP-Rule" id="MF_00019"/>
    </source>
</evidence>
<gene>
    <name evidence="1" type="primary">plsX</name>
    <name type="ordered locus">Pnec_0404</name>
</gene>
<protein>
    <recommendedName>
        <fullName evidence="1">Phosphate acyltransferase</fullName>
        <ecNumber evidence="1">2.3.1.274</ecNumber>
    </recommendedName>
    <alternativeName>
        <fullName evidence="1">Acyl-ACP phosphotransacylase</fullName>
    </alternativeName>
    <alternativeName>
        <fullName evidence="1">Acyl-[acyl-carrier-protein]--phosphate acyltransferase</fullName>
    </alternativeName>
    <alternativeName>
        <fullName evidence="1">Phosphate-acyl-ACP acyltransferase</fullName>
    </alternativeName>
</protein>
<name>PLSX_POLNS</name>
<organism>
    <name type="scientific">Polynucleobacter necessarius subsp. necessarius (strain STIR1)</name>
    <dbReference type="NCBI Taxonomy" id="452638"/>
    <lineage>
        <taxon>Bacteria</taxon>
        <taxon>Pseudomonadati</taxon>
        <taxon>Pseudomonadota</taxon>
        <taxon>Betaproteobacteria</taxon>
        <taxon>Burkholderiales</taxon>
        <taxon>Burkholderiaceae</taxon>
        <taxon>Polynucleobacter</taxon>
    </lineage>
</organism>
<feature type="chain" id="PRO_1000089927" description="Phosphate acyltransferase">
    <location>
        <begin position="1"/>
        <end position="337"/>
    </location>
</feature>
<comment type="function">
    <text evidence="1">Catalyzes the reversible formation of acyl-phosphate (acyl-PO(4)) from acyl-[acyl-carrier-protein] (acyl-ACP). This enzyme utilizes acyl-ACP as fatty acyl donor, but not acyl-CoA.</text>
</comment>
<comment type="catalytic activity">
    <reaction evidence="1">
        <text>a fatty acyl-[ACP] + phosphate = an acyl phosphate + holo-[ACP]</text>
        <dbReference type="Rhea" id="RHEA:42292"/>
        <dbReference type="Rhea" id="RHEA-COMP:9685"/>
        <dbReference type="Rhea" id="RHEA-COMP:14125"/>
        <dbReference type="ChEBI" id="CHEBI:43474"/>
        <dbReference type="ChEBI" id="CHEBI:59918"/>
        <dbReference type="ChEBI" id="CHEBI:64479"/>
        <dbReference type="ChEBI" id="CHEBI:138651"/>
        <dbReference type="EC" id="2.3.1.274"/>
    </reaction>
</comment>
<comment type="pathway">
    <text evidence="1">Lipid metabolism; phospholipid metabolism.</text>
</comment>
<comment type="subunit">
    <text evidence="1">Homodimer. Probably interacts with PlsY.</text>
</comment>
<comment type="subcellular location">
    <subcellularLocation>
        <location evidence="1">Cytoplasm</location>
    </subcellularLocation>
    <text evidence="1">Associated with the membrane possibly through PlsY.</text>
</comment>
<comment type="similarity">
    <text evidence="1">Belongs to the PlsX family.</text>
</comment>
<reference key="1">
    <citation type="journal article" date="2013" name="Proc. Natl. Acad. Sci. U.S.A.">
        <title>Polynucleobacter necessarius, a model for genome reduction in both free-living and symbiotic bacteria.</title>
        <authorList>
            <person name="Boscaro V."/>
            <person name="Felletti M."/>
            <person name="Vannini C."/>
            <person name="Ackerman M.S."/>
            <person name="Chain P.S."/>
            <person name="Malfatti S."/>
            <person name="Vergez L.M."/>
            <person name="Shin M."/>
            <person name="Doak T.G."/>
            <person name="Lynch M."/>
            <person name="Petroni G."/>
        </authorList>
    </citation>
    <scope>NUCLEOTIDE SEQUENCE [LARGE SCALE GENOMIC DNA]</scope>
    <source>
        <strain>STIR1</strain>
    </source>
</reference>
<proteinExistence type="inferred from homology"/>